<protein>
    <recommendedName>
        <fullName>Alpha-elapitoxin-Dpp2c</fullName>
        <shortName>Alpha-EPTX-Dpp2c</shortName>
    </recommendedName>
    <alternativeName>
        <fullName>Long neurotoxin 2</fullName>
    </alternativeName>
    <alternativeName>
        <fullName>Neurotoxin delta</fullName>
    </alternativeName>
    <alternativeName>
        <fullName>Toxin TN2</fullName>
    </alternativeName>
</protein>
<dbReference type="PIR" id="A01668">
    <property type="entry name" value="N2EP2D"/>
</dbReference>
<dbReference type="SMR" id="P01397"/>
<dbReference type="GO" id="GO:0005576">
    <property type="term" value="C:extracellular region"/>
    <property type="evidence" value="ECO:0007669"/>
    <property type="project" value="UniProtKB-SubCell"/>
</dbReference>
<dbReference type="GO" id="GO:0030550">
    <property type="term" value="F:acetylcholine receptor inhibitor activity"/>
    <property type="evidence" value="ECO:0007669"/>
    <property type="project" value="UniProtKB-KW"/>
</dbReference>
<dbReference type="GO" id="GO:0099106">
    <property type="term" value="F:ion channel regulator activity"/>
    <property type="evidence" value="ECO:0007669"/>
    <property type="project" value="UniProtKB-KW"/>
</dbReference>
<dbReference type="GO" id="GO:0090729">
    <property type="term" value="F:toxin activity"/>
    <property type="evidence" value="ECO:0007669"/>
    <property type="project" value="UniProtKB-KW"/>
</dbReference>
<dbReference type="CDD" id="cd00206">
    <property type="entry name" value="TFP_snake_toxin"/>
    <property type="match status" value="1"/>
</dbReference>
<dbReference type="Gene3D" id="2.10.60.10">
    <property type="entry name" value="CD59"/>
    <property type="match status" value="1"/>
</dbReference>
<dbReference type="InterPro" id="IPR003571">
    <property type="entry name" value="Snake_3FTx"/>
</dbReference>
<dbReference type="InterPro" id="IPR045860">
    <property type="entry name" value="Snake_toxin-like_sf"/>
</dbReference>
<dbReference type="InterPro" id="IPR018354">
    <property type="entry name" value="Snake_toxin_con_site"/>
</dbReference>
<dbReference type="InterPro" id="IPR054131">
    <property type="entry name" value="Toxin_cobra-type"/>
</dbReference>
<dbReference type="Pfam" id="PF21947">
    <property type="entry name" value="Toxin_cobra-type"/>
    <property type="match status" value="1"/>
</dbReference>
<dbReference type="SUPFAM" id="SSF57302">
    <property type="entry name" value="Snake toxin-like"/>
    <property type="match status" value="1"/>
</dbReference>
<dbReference type="PROSITE" id="PS00272">
    <property type="entry name" value="SNAKE_TOXIN"/>
    <property type="match status" value="1"/>
</dbReference>
<organism>
    <name type="scientific">Dendroaspis polylepis polylepis</name>
    <name type="common">Black mamba</name>
    <dbReference type="NCBI Taxonomy" id="8620"/>
    <lineage>
        <taxon>Eukaryota</taxon>
        <taxon>Metazoa</taxon>
        <taxon>Chordata</taxon>
        <taxon>Craniata</taxon>
        <taxon>Vertebrata</taxon>
        <taxon>Euteleostomi</taxon>
        <taxon>Lepidosauria</taxon>
        <taxon>Squamata</taxon>
        <taxon>Bifurcata</taxon>
        <taxon>Unidentata</taxon>
        <taxon>Episquamata</taxon>
        <taxon>Toxicofera</taxon>
        <taxon>Serpentes</taxon>
        <taxon>Colubroidea</taxon>
        <taxon>Elapidae</taxon>
        <taxon>Elapinae</taxon>
        <taxon>Dendroaspis</taxon>
    </lineage>
</organism>
<reference key="1">
    <citation type="thesis" date="1973" institute="University of Pretoria" country="South Africa">
        <authorList>
            <person name="Strydom D.J."/>
        </authorList>
    </citation>
    <scope>PROTEIN SEQUENCE</scope>
    <scope>SUBCELLULAR LOCATION</scope>
    <source>
        <tissue>Venom gland</tissue>
    </source>
</reference>
<keyword id="KW-0008">Acetylcholine receptor inhibiting toxin</keyword>
<keyword id="KW-0903">Direct protein sequencing</keyword>
<keyword id="KW-1015">Disulfide bond</keyword>
<keyword id="KW-0872">Ion channel impairing toxin</keyword>
<keyword id="KW-0528">Neurotoxin</keyword>
<keyword id="KW-0629">Postsynaptic neurotoxin</keyword>
<keyword id="KW-0964">Secreted</keyword>
<keyword id="KW-0800">Toxin</keyword>
<name>3L22_DENPO</name>
<evidence type="ECO:0000250" key="1"/>
<evidence type="ECO:0000250" key="2">
    <source>
        <dbReference type="UniProtKB" id="P60615"/>
    </source>
</evidence>
<evidence type="ECO:0000269" key="3">
    <source ref="1"/>
</evidence>
<evidence type="ECO:0000305" key="4"/>
<accession>P01397</accession>
<feature type="chain" id="PRO_0000093539" description="Alpha-elapitoxin-Dpp2c">
    <location>
        <begin position="1"/>
        <end position="72"/>
    </location>
</feature>
<feature type="disulfide bond" evidence="1">
    <location>
        <begin position="3"/>
        <end position="21"/>
    </location>
</feature>
<feature type="disulfide bond" evidence="1">
    <location>
        <begin position="14"/>
        <end position="42"/>
    </location>
</feature>
<feature type="disulfide bond" evidence="1">
    <location>
        <begin position="27"/>
        <end position="31"/>
    </location>
</feature>
<feature type="disulfide bond" evidence="1">
    <location>
        <begin position="46"/>
        <end position="57"/>
    </location>
</feature>
<feature type="disulfide bond" evidence="1">
    <location>
        <begin position="58"/>
        <end position="63"/>
    </location>
</feature>
<proteinExistence type="evidence at protein level"/>
<comment type="function">
    <text evidence="2">Binds with high affinity to muscular (alpha-1/CHRNA1) and neuronal (alpha-7/CHRNA7) nicotinic acetylcholine receptor (nAChR) and inhibits acetylcholine from binding to the receptor, thereby impairing neuromuscular and neuronal transmission.</text>
</comment>
<comment type="subcellular location">
    <subcellularLocation>
        <location evidence="3">Secreted</location>
    </subcellularLocation>
</comment>
<comment type="tissue specificity">
    <text evidence="4">Expressed by the venom gland.</text>
</comment>
<comment type="similarity">
    <text evidence="4">Belongs to the three-finger toxin family. Long-chain subfamily. Type II alpha-neurotoxin sub-subfamily.</text>
</comment>
<sequence>RTCNKTPSDQSKICPPGENICYTKTWCDAWCSQRGKIVELGCAATCPKVKAGVEIKCCSTDNCNKFKFGKPR</sequence>